<feature type="chain" id="PRO_0000383135" description="Small ribosomal subunit protein eS7">
    <location>
        <begin position="1"/>
        <end position="170"/>
    </location>
</feature>
<name>RS7_ENCCU</name>
<keyword id="KW-0002">3D-structure</keyword>
<keyword id="KW-0963">Cytoplasm</keyword>
<keyword id="KW-1185">Reference proteome</keyword>
<keyword id="KW-0687">Ribonucleoprotein</keyword>
<keyword id="KW-0689">Ribosomal protein</keyword>
<gene>
    <name type="primary">RPS7</name>
    <name type="ordered locus">ECU11_0780</name>
</gene>
<accession>Q8SQX3</accession>
<proteinExistence type="evidence at protein level"/>
<dbReference type="EMBL" id="AL590450">
    <property type="protein sequence ID" value="CAD25988.2"/>
    <property type="molecule type" value="Genomic_DNA"/>
</dbReference>
<dbReference type="RefSeq" id="NP_586384.1">
    <property type="nucleotide sequence ID" value="NM_001042217.1"/>
</dbReference>
<dbReference type="PDB" id="7QEP">
    <property type="method" value="EM"/>
    <property type="resolution" value="2.70 A"/>
    <property type="chains" value="S7=1-170"/>
</dbReference>
<dbReference type="PDBsum" id="7QEP"/>
<dbReference type="EMDB" id="EMD-13936"/>
<dbReference type="SMR" id="Q8SQX3"/>
<dbReference type="STRING" id="284813.Q8SQX3"/>
<dbReference type="GeneID" id="860037"/>
<dbReference type="KEGG" id="ecu:ECU11_0780"/>
<dbReference type="VEuPathDB" id="MicrosporidiaDB:ECU11_0780"/>
<dbReference type="HOGENOM" id="CLU_1570636_0_0_1"/>
<dbReference type="InParanoid" id="Q8SQX3"/>
<dbReference type="OrthoDB" id="2188349at2759"/>
<dbReference type="Proteomes" id="UP000000819">
    <property type="component" value="Chromosome XI"/>
</dbReference>
<dbReference type="GO" id="GO:0005737">
    <property type="term" value="C:cytoplasm"/>
    <property type="evidence" value="ECO:0007669"/>
    <property type="project" value="UniProtKB-SubCell"/>
</dbReference>
<dbReference type="GO" id="GO:1990904">
    <property type="term" value="C:ribonucleoprotein complex"/>
    <property type="evidence" value="ECO:0007669"/>
    <property type="project" value="UniProtKB-KW"/>
</dbReference>
<dbReference type="GO" id="GO:0005840">
    <property type="term" value="C:ribosome"/>
    <property type="evidence" value="ECO:0007669"/>
    <property type="project" value="UniProtKB-KW"/>
</dbReference>
<evidence type="ECO:0000250" key="1"/>
<evidence type="ECO:0000269" key="2">
    <source>
    </source>
</evidence>
<evidence type="ECO:0000305" key="3"/>
<organism>
    <name type="scientific">Encephalitozoon cuniculi (strain GB-M1)</name>
    <name type="common">Microsporidian parasite</name>
    <dbReference type="NCBI Taxonomy" id="284813"/>
    <lineage>
        <taxon>Eukaryota</taxon>
        <taxon>Fungi</taxon>
        <taxon>Fungi incertae sedis</taxon>
        <taxon>Microsporidia</taxon>
        <taxon>Unikaryonidae</taxon>
        <taxon>Encephalitozoon</taxon>
    </lineage>
</organism>
<sequence>MSTQTEAEMSIAGIIRKHAKDISAPPEVFDKISIQIIICDGGEKIMVVKVPRSILHGVQMNYSNIIKAAKQQFHDYYIMFVRNFEAEGGGKTMTKRKAKEVEEVWLANACFPFLLTGTRTDVRGVDDMVVNVLLERRTSLSRAEMDAIGAALHGLLGKNYIVDVNHHTKN</sequence>
<protein>
    <recommendedName>
        <fullName evidence="3">Small ribosomal subunit protein eS7</fullName>
    </recommendedName>
    <alternativeName>
        <fullName>40S ribosomal protein S7</fullName>
    </alternativeName>
</protein>
<comment type="subunit">
    <text evidence="1">Component of the small ribosomal subunit.</text>
</comment>
<comment type="subcellular location">
    <subcellularLocation>
        <location evidence="3">Cytoplasm</location>
    </subcellularLocation>
</comment>
<comment type="developmental stage">
    <text evidence="2">Expressed in late sporogonial stages.</text>
</comment>
<comment type="similarity">
    <text evidence="3">Belongs to the eukaryotic ribosomal protein eS7 family.</text>
</comment>
<reference key="1">
    <citation type="journal article" date="2001" name="Nature">
        <title>Genome sequence and gene compaction of the eukaryote parasite Encephalitozoon cuniculi.</title>
        <authorList>
            <person name="Katinka M.D."/>
            <person name="Duprat S."/>
            <person name="Cornillot E."/>
            <person name="Metenier G."/>
            <person name="Thomarat F."/>
            <person name="Prensier G."/>
            <person name="Barbe V."/>
            <person name="Peyretaillade E."/>
            <person name="Brottier P."/>
            <person name="Wincker P."/>
            <person name="Delbac F."/>
            <person name="El Alaoui H."/>
            <person name="Peyret P."/>
            <person name="Saurin W."/>
            <person name="Gouy M."/>
            <person name="Weissenbach J."/>
            <person name="Vivares C.P."/>
        </authorList>
    </citation>
    <scope>NUCLEOTIDE SEQUENCE [LARGE SCALE GENOMIC DNA]</scope>
    <source>
        <strain>GB-M1</strain>
    </source>
</reference>
<reference key="2">
    <citation type="journal article" date="2009" name="BMC Genomics">
        <title>Identification of transcriptional signals in Encephalitozoon cuniculi widespread among Microsporidia phylum: support for accurate structural genome annotation.</title>
        <authorList>
            <person name="Peyretaillade E."/>
            <person name="Goncalves O."/>
            <person name="Terrat S."/>
            <person name="Dugat-Bony E."/>
            <person name="Wincker P."/>
            <person name="Cornman R.S."/>
            <person name="Evans J.D."/>
            <person name="Delbac F."/>
            <person name="Peyret P."/>
        </authorList>
    </citation>
    <scope>GENOME REANNOTATION</scope>
    <source>
        <strain>GB-M1</strain>
    </source>
</reference>
<reference key="3">
    <citation type="journal article" date="2006" name="Proteomics">
        <title>Proteomic analysis of the eukaryotic parasite Encephalitozoon cuniculi (microsporidia): a reference map for proteins expressed in late sporogonial stages.</title>
        <authorList>
            <person name="Brosson D."/>
            <person name="Kuhn L."/>
            <person name="Delbac F."/>
            <person name="Garin J."/>
            <person name="Vivares C.P."/>
            <person name="Texier C."/>
        </authorList>
    </citation>
    <scope>IDENTIFICATION BY MASS SPECTROMETRY [LARGE SCALE ANALYSIS]</scope>
    <scope>DEVELOPMENTAL STAGE</scope>
</reference>